<name>Y2581_STAAM</name>
<dbReference type="EC" id="3.-.-.-"/>
<dbReference type="EMBL" id="BA000017">
    <property type="protein sequence ID" value="BAB58743.1"/>
    <property type="molecule type" value="Genomic_DNA"/>
</dbReference>
<dbReference type="RefSeq" id="WP_000448918.1">
    <property type="nucleotide sequence ID" value="NC_002758.2"/>
</dbReference>
<dbReference type="SMR" id="Q99R57"/>
<dbReference type="ESTHER" id="staau-SA2367">
    <property type="family name" value="6_AlphaBeta_hydrolase"/>
</dbReference>
<dbReference type="DNASU" id="1122606"/>
<dbReference type="KEGG" id="sav:SAV2581"/>
<dbReference type="HOGENOM" id="CLU_083329_0_0_9"/>
<dbReference type="PhylomeDB" id="Q99R57"/>
<dbReference type="Proteomes" id="UP000002481">
    <property type="component" value="Chromosome"/>
</dbReference>
<dbReference type="GO" id="GO:0016020">
    <property type="term" value="C:membrane"/>
    <property type="evidence" value="ECO:0007669"/>
    <property type="project" value="TreeGrafter"/>
</dbReference>
<dbReference type="GO" id="GO:0016787">
    <property type="term" value="F:hydrolase activity"/>
    <property type="evidence" value="ECO:0007669"/>
    <property type="project" value="UniProtKB-KW"/>
</dbReference>
<dbReference type="Gene3D" id="3.40.50.1820">
    <property type="entry name" value="alpha/beta hydrolase"/>
    <property type="match status" value="1"/>
</dbReference>
<dbReference type="InterPro" id="IPR000073">
    <property type="entry name" value="AB_hydrolase_1"/>
</dbReference>
<dbReference type="InterPro" id="IPR029058">
    <property type="entry name" value="AB_hydrolase_fold"/>
</dbReference>
<dbReference type="InterPro" id="IPR050266">
    <property type="entry name" value="AB_hydrolase_sf"/>
</dbReference>
<dbReference type="PANTHER" id="PTHR43798:SF33">
    <property type="entry name" value="HYDROLASE, PUTATIVE (AFU_ORTHOLOGUE AFUA_2G14860)-RELATED"/>
    <property type="match status" value="1"/>
</dbReference>
<dbReference type="PANTHER" id="PTHR43798">
    <property type="entry name" value="MONOACYLGLYCEROL LIPASE"/>
    <property type="match status" value="1"/>
</dbReference>
<dbReference type="Pfam" id="PF00561">
    <property type="entry name" value="Abhydrolase_1"/>
    <property type="match status" value="1"/>
</dbReference>
<dbReference type="SUPFAM" id="SSF53474">
    <property type="entry name" value="alpha/beta-Hydrolases"/>
    <property type="match status" value="1"/>
</dbReference>
<keyword id="KW-0378">Hydrolase</keyword>
<protein>
    <recommendedName>
        <fullName>Uncharacterized hydrolase SAV2581</fullName>
        <ecNumber>3.-.-.-</ecNumber>
    </recommendedName>
</protein>
<feature type="chain" id="PRO_0000298613" description="Uncharacterized hydrolase SAV2581">
    <location>
        <begin position="1"/>
        <end position="276"/>
    </location>
</feature>
<feature type="domain" description="AB hydrolase-1" evidence="1">
    <location>
        <begin position="20"/>
        <end position="137"/>
    </location>
</feature>
<feature type="region of interest" description="Disordered" evidence="2">
    <location>
        <begin position="57"/>
        <end position="76"/>
    </location>
</feature>
<evidence type="ECO:0000255" key="1"/>
<evidence type="ECO:0000256" key="2">
    <source>
        <dbReference type="SAM" id="MobiDB-lite"/>
    </source>
</evidence>
<evidence type="ECO:0000305" key="3"/>
<gene>
    <name type="ordered locus">SAV2581</name>
</gene>
<accession>Q99R57</accession>
<sequence>METLELQGAKLRYHQVGQGPVLIFIPGANGTGNIFLPLAEQLKDHFTVVAVDRRDYGESELTEPLPDSASNPDSDYRVKRDAQDIAELAKSLSDEPVYILGSSSGSIVAMHVLKDYPEVVKKIAFHEPPINTFLPDSTYWKDKNDDIVHQILTEGLEKGMKTFGETLNIAPIDAKMMSQPADTEEGRIEQYKRTMFWSEFEIRQYTHSDITLDDFTKYSDKITLLNGTDSRGSFPQDVNFYINKETGIPIVDIPGGHLGYIQKPEGFADVLLNMWG</sequence>
<reference key="1">
    <citation type="journal article" date="2001" name="Lancet">
        <title>Whole genome sequencing of meticillin-resistant Staphylococcus aureus.</title>
        <authorList>
            <person name="Kuroda M."/>
            <person name="Ohta T."/>
            <person name="Uchiyama I."/>
            <person name="Baba T."/>
            <person name="Yuzawa H."/>
            <person name="Kobayashi I."/>
            <person name="Cui L."/>
            <person name="Oguchi A."/>
            <person name="Aoki K."/>
            <person name="Nagai Y."/>
            <person name="Lian J.-Q."/>
            <person name="Ito T."/>
            <person name="Kanamori M."/>
            <person name="Matsumaru H."/>
            <person name="Maruyama A."/>
            <person name="Murakami H."/>
            <person name="Hosoyama A."/>
            <person name="Mizutani-Ui Y."/>
            <person name="Takahashi N.K."/>
            <person name="Sawano T."/>
            <person name="Inoue R."/>
            <person name="Kaito C."/>
            <person name="Sekimizu K."/>
            <person name="Hirakawa H."/>
            <person name="Kuhara S."/>
            <person name="Goto S."/>
            <person name="Yabuzaki J."/>
            <person name="Kanehisa M."/>
            <person name="Yamashita A."/>
            <person name="Oshima K."/>
            <person name="Furuya K."/>
            <person name="Yoshino C."/>
            <person name="Shiba T."/>
            <person name="Hattori M."/>
            <person name="Ogasawara N."/>
            <person name="Hayashi H."/>
            <person name="Hiramatsu K."/>
        </authorList>
    </citation>
    <scope>NUCLEOTIDE SEQUENCE [LARGE SCALE GENOMIC DNA]</scope>
    <source>
        <strain>Mu50 / ATCC 700699</strain>
    </source>
</reference>
<proteinExistence type="inferred from homology"/>
<comment type="similarity">
    <text evidence="3">Belongs to the AB hydrolase superfamily.</text>
</comment>
<organism>
    <name type="scientific">Staphylococcus aureus (strain Mu50 / ATCC 700699)</name>
    <dbReference type="NCBI Taxonomy" id="158878"/>
    <lineage>
        <taxon>Bacteria</taxon>
        <taxon>Bacillati</taxon>
        <taxon>Bacillota</taxon>
        <taxon>Bacilli</taxon>
        <taxon>Bacillales</taxon>
        <taxon>Staphylococcaceae</taxon>
        <taxon>Staphylococcus</taxon>
    </lineage>
</organism>